<protein>
    <recommendedName>
        <fullName evidence="1">Translation factor guf1, mitochondrial</fullName>
        <ecNumber>3.6.5.-</ecNumber>
    </recommendedName>
    <alternativeName>
        <fullName evidence="1">Elongation factor 4 homolog</fullName>
        <shortName evidence="1">EF-4</shortName>
    </alternativeName>
    <alternativeName>
        <fullName evidence="1">GTPase guf1</fullName>
    </alternativeName>
    <alternativeName>
        <fullName evidence="1">Ribosomal back-translocase</fullName>
    </alternativeName>
</protein>
<name>GUF1_NEOFI</name>
<accession>A1D5Z0</accession>
<sequence length="683" mass="76132">MRGCLQLARWLSAAPKGTAASLTRAPFVLANAPRFFTSSASHAGSRSTATKPVSDLENRIAAIPIERYRNFCIVAHVDHGKSTLSDRLLELTGTIEPGSNKQVLDKLDVERERGITVKAQTCSMIYNHNGEDYLLHLVDTPGHVDFRAEVSRSYASCGGALLLVDASQGIQAQTVANFYLAFAQGLELIPVINKVDLPSAEPERALEQMKNSFELDTENAVMVSAKTGLNVEKLLPTVIEKIPAYGYFPVYLHKLFPLLTLTSPIGDCKKPLRMLLVDSWYDSYKGVICLVRIFDGEIRAGQQVVSFATGLKYYVGEVGIMYPNETPQSVLRAGQVGYIYFNPGMKRSKEAKIGDTFTRVGFEKAVEPLPGFEEPKSMVFVAAYPVDADHFEHLEDSINQLVLNDRSITVQKESSEALGAGFRLGFLGTLHCSVFEDRLRQEHGASIIITPPSVPVKIIWKDGKEEIITSPAKFPEDEELRSKVAEIQEPYVLATLTFPEEYLGKVIELCEANRGEQKSLEYFTATQVILKYELPLAQLVDDFFGKLKGSTKGYASLDYEESAWQTGNIVKLQLLVNKAPVDAVARIVHLSQVERLGRQWVTKFKEHVDRQLFEVVIQAAVGKKIIARETVKPYRKDVLAKLHASDVSRRRKLLEKQKEGRKRLRAVGNVVIEHKAFQAFLAK</sequence>
<keyword id="KW-0342">GTP-binding</keyword>
<keyword id="KW-0378">Hydrolase</keyword>
<keyword id="KW-0472">Membrane</keyword>
<keyword id="KW-0496">Mitochondrion</keyword>
<keyword id="KW-0999">Mitochondrion inner membrane</keyword>
<keyword id="KW-0547">Nucleotide-binding</keyword>
<keyword id="KW-0648">Protein biosynthesis</keyword>
<keyword id="KW-1185">Reference proteome</keyword>
<keyword id="KW-0809">Transit peptide</keyword>
<gene>
    <name type="primary">guf1</name>
    <name type="ORF">NFIA_062950</name>
</gene>
<proteinExistence type="inferred from homology"/>
<feature type="transit peptide" description="Mitochondrion" evidence="1">
    <location>
        <begin position="1"/>
        <end position="43"/>
    </location>
</feature>
<feature type="chain" id="PRO_0000402893" description="Translation factor guf1, mitochondrial">
    <location>
        <begin position="44"/>
        <end position="683"/>
    </location>
</feature>
<feature type="domain" description="tr-type G">
    <location>
        <begin position="66"/>
        <end position="250"/>
    </location>
</feature>
<feature type="binding site" evidence="1">
    <location>
        <begin position="75"/>
        <end position="82"/>
    </location>
    <ligand>
        <name>GTP</name>
        <dbReference type="ChEBI" id="CHEBI:37565"/>
    </ligand>
</feature>
<feature type="binding site" evidence="1">
    <location>
        <begin position="139"/>
        <end position="143"/>
    </location>
    <ligand>
        <name>GTP</name>
        <dbReference type="ChEBI" id="CHEBI:37565"/>
    </ligand>
</feature>
<feature type="binding site" evidence="1">
    <location>
        <begin position="193"/>
        <end position="196"/>
    </location>
    <ligand>
        <name>GTP</name>
        <dbReference type="ChEBI" id="CHEBI:37565"/>
    </ligand>
</feature>
<organism>
    <name type="scientific">Neosartorya fischeri (strain ATCC 1020 / DSM 3700 / CBS 544.65 / FGSC A1164 / JCM 1740 / NRRL 181 / WB 181)</name>
    <name type="common">Aspergillus fischerianus</name>
    <dbReference type="NCBI Taxonomy" id="331117"/>
    <lineage>
        <taxon>Eukaryota</taxon>
        <taxon>Fungi</taxon>
        <taxon>Dikarya</taxon>
        <taxon>Ascomycota</taxon>
        <taxon>Pezizomycotina</taxon>
        <taxon>Eurotiomycetes</taxon>
        <taxon>Eurotiomycetidae</taxon>
        <taxon>Eurotiales</taxon>
        <taxon>Aspergillaceae</taxon>
        <taxon>Aspergillus</taxon>
        <taxon>Aspergillus subgen. Fumigati</taxon>
    </lineage>
</organism>
<comment type="function">
    <text evidence="1">Promotes mitochondrial protein synthesis. May act as a fidelity factor of the translation reaction, by catalyzing a one-codon backward translocation of tRNAs on improperly translocated ribosomes. Binds to mitochondrial ribosomes in a GTP-dependent manner.</text>
</comment>
<comment type="catalytic activity">
    <reaction evidence="1">
        <text>GTP + H2O = GDP + phosphate + H(+)</text>
        <dbReference type="Rhea" id="RHEA:19669"/>
        <dbReference type="ChEBI" id="CHEBI:15377"/>
        <dbReference type="ChEBI" id="CHEBI:15378"/>
        <dbReference type="ChEBI" id="CHEBI:37565"/>
        <dbReference type="ChEBI" id="CHEBI:43474"/>
        <dbReference type="ChEBI" id="CHEBI:58189"/>
    </reaction>
</comment>
<comment type="subcellular location">
    <subcellularLocation>
        <location evidence="1">Mitochondrion inner membrane</location>
        <topology evidence="1">Peripheral membrane protein</topology>
        <orientation evidence="1">Matrix side</orientation>
    </subcellularLocation>
</comment>
<comment type="similarity">
    <text evidence="2">Belongs to the TRAFAC class translation factor GTPase superfamily. Classic translation factor GTPase family. LepA subfamily.</text>
</comment>
<dbReference type="EC" id="3.6.5.-"/>
<dbReference type="EMBL" id="DS027690">
    <property type="protein sequence ID" value="EAW21134.1"/>
    <property type="molecule type" value="Genomic_DNA"/>
</dbReference>
<dbReference type="RefSeq" id="XP_001263031.1">
    <property type="nucleotide sequence ID" value="XM_001263030.1"/>
</dbReference>
<dbReference type="SMR" id="A1D5Z0"/>
<dbReference type="STRING" id="331117.A1D5Z0"/>
<dbReference type="EnsemblFungi" id="EAW21134">
    <property type="protein sequence ID" value="EAW21134"/>
    <property type="gene ID" value="NFIA_062950"/>
</dbReference>
<dbReference type="GeneID" id="4589581"/>
<dbReference type="KEGG" id="nfi:NFIA_062950"/>
<dbReference type="VEuPathDB" id="FungiDB:NFIA_062950"/>
<dbReference type="eggNOG" id="KOG0462">
    <property type="taxonomic scope" value="Eukaryota"/>
</dbReference>
<dbReference type="HOGENOM" id="CLU_009995_3_1_1"/>
<dbReference type="OMA" id="QVKCDEN"/>
<dbReference type="OrthoDB" id="1074at2759"/>
<dbReference type="Proteomes" id="UP000006702">
    <property type="component" value="Unassembled WGS sequence"/>
</dbReference>
<dbReference type="GO" id="GO:0005743">
    <property type="term" value="C:mitochondrial inner membrane"/>
    <property type="evidence" value="ECO:0007669"/>
    <property type="project" value="UniProtKB-SubCell"/>
</dbReference>
<dbReference type="GO" id="GO:0005759">
    <property type="term" value="C:mitochondrial matrix"/>
    <property type="evidence" value="ECO:0007669"/>
    <property type="project" value="UniProtKB-UniRule"/>
</dbReference>
<dbReference type="GO" id="GO:0005525">
    <property type="term" value="F:GTP binding"/>
    <property type="evidence" value="ECO:0007669"/>
    <property type="project" value="UniProtKB-UniRule"/>
</dbReference>
<dbReference type="GO" id="GO:0003924">
    <property type="term" value="F:GTPase activity"/>
    <property type="evidence" value="ECO:0007669"/>
    <property type="project" value="UniProtKB-UniRule"/>
</dbReference>
<dbReference type="GO" id="GO:0097177">
    <property type="term" value="F:mitochondrial ribosome binding"/>
    <property type="evidence" value="ECO:0007669"/>
    <property type="project" value="EnsemblFungi"/>
</dbReference>
<dbReference type="GO" id="GO:0045727">
    <property type="term" value="P:positive regulation of translation"/>
    <property type="evidence" value="ECO:0007669"/>
    <property type="project" value="UniProtKB-UniRule"/>
</dbReference>
<dbReference type="GO" id="GO:0006412">
    <property type="term" value="P:translation"/>
    <property type="evidence" value="ECO:0007669"/>
    <property type="project" value="UniProtKB-KW"/>
</dbReference>
<dbReference type="CDD" id="cd03699">
    <property type="entry name" value="EF4_II"/>
    <property type="match status" value="1"/>
</dbReference>
<dbReference type="CDD" id="cd01890">
    <property type="entry name" value="LepA"/>
    <property type="match status" value="1"/>
</dbReference>
<dbReference type="CDD" id="cd03709">
    <property type="entry name" value="lepA_C"/>
    <property type="match status" value="1"/>
</dbReference>
<dbReference type="FunFam" id="3.40.50.300:FF:000078">
    <property type="entry name" value="Elongation factor 4"/>
    <property type="match status" value="1"/>
</dbReference>
<dbReference type="FunFam" id="2.40.30.10:FF:000015">
    <property type="entry name" value="Translation factor GUF1, mitochondrial"/>
    <property type="match status" value="1"/>
</dbReference>
<dbReference type="FunFam" id="3.30.70.240:FF:000007">
    <property type="entry name" value="Translation factor GUF1, mitochondrial"/>
    <property type="match status" value="1"/>
</dbReference>
<dbReference type="FunFam" id="3.30.70.2570:FF:000001">
    <property type="entry name" value="Translation factor GUF1, mitochondrial"/>
    <property type="match status" value="1"/>
</dbReference>
<dbReference type="FunFam" id="3.30.70.870:FF:000004">
    <property type="entry name" value="Translation factor GUF1, mitochondrial"/>
    <property type="match status" value="1"/>
</dbReference>
<dbReference type="Gene3D" id="3.30.70.240">
    <property type="match status" value="1"/>
</dbReference>
<dbReference type="Gene3D" id="3.30.70.2570">
    <property type="entry name" value="Elongation factor 4, C-terminal domain"/>
    <property type="match status" value="1"/>
</dbReference>
<dbReference type="Gene3D" id="3.30.70.870">
    <property type="entry name" value="Elongation Factor G (Translational Gtpase), domain 3"/>
    <property type="match status" value="1"/>
</dbReference>
<dbReference type="Gene3D" id="3.40.50.300">
    <property type="entry name" value="P-loop containing nucleotide triphosphate hydrolases"/>
    <property type="match status" value="1"/>
</dbReference>
<dbReference type="Gene3D" id="2.40.30.10">
    <property type="entry name" value="Translation factors"/>
    <property type="match status" value="1"/>
</dbReference>
<dbReference type="HAMAP" id="MF_00071">
    <property type="entry name" value="LepA"/>
    <property type="match status" value="1"/>
</dbReference>
<dbReference type="InterPro" id="IPR006297">
    <property type="entry name" value="EF-4"/>
</dbReference>
<dbReference type="InterPro" id="IPR035647">
    <property type="entry name" value="EFG_III/V"/>
</dbReference>
<dbReference type="InterPro" id="IPR000640">
    <property type="entry name" value="EFG_V-like"/>
</dbReference>
<dbReference type="InterPro" id="IPR004161">
    <property type="entry name" value="EFTu-like_2"/>
</dbReference>
<dbReference type="InterPro" id="IPR031157">
    <property type="entry name" value="G_TR_CS"/>
</dbReference>
<dbReference type="InterPro" id="IPR038363">
    <property type="entry name" value="LepA_C_sf"/>
</dbReference>
<dbReference type="InterPro" id="IPR013842">
    <property type="entry name" value="LepA_CTD"/>
</dbReference>
<dbReference type="InterPro" id="IPR035654">
    <property type="entry name" value="LepA_IV"/>
</dbReference>
<dbReference type="InterPro" id="IPR027417">
    <property type="entry name" value="P-loop_NTPase"/>
</dbReference>
<dbReference type="InterPro" id="IPR005225">
    <property type="entry name" value="Small_GTP-bd"/>
</dbReference>
<dbReference type="InterPro" id="IPR000795">
    <property type="entry name" value="T_Tr_GTP-bd_dom"/>
</dbReference>
<dbReference type="InterPro" id="IPR009000">
    <property type="entry name" value="Transl_B-barrel_sf"/>
</dbReference>
<dbReference type="NCBIfam" id="TIGR01393">
    <property type="entry name" value="lepA"/>
    <property type="match status" value="1"/>
</dbReference>
<dbReference type="NCBIfam" id="TIGR00231">
    <property type="entry name" value="small_GTP"/>
    <property type="match status" value="1"/>
</dbReference>
<dbReference type="PANTHER" id="PTHR43512:SF7">
    <property type="entry name" value="TRANSLATION FACTOR GUF1, MITOCHONDRIAL"/>
    <property type="match status" value="1"/>
</dbReference>
<dbReference type="PANTHER" id="PTHR43512">
    <property type="entry name" value="TRANSLATION FACTOR GUF1-RELATED"/>
    <property type="match status" value="1"/>
</dbReference>
<dbReference type="Pfam" id="PF00679">
    <property type="entry name" value="EFG_C"/>
    <property type="match status" value="1"/>
</dbReference>
<dbReference type="Pfam" id="PF00009">
    <property type="entry name" value="GTP_EFTU"/>
    <property type="match status" value="1"/>
</dbReference>
<dbReference type="Pfam" id="PF03144">
    <property type="entry name" value="GTP_EFTU_D2"/>
    <property type="match status" value="1"/>
</dbReference>
<dbReference type="Pfam" id="PF06421">
    <property type="entry name" value="LepA_C"/>
    <property type="match status" value="1"/>
</dbReference>
<dbReference type="PRINTS" id="PR00315">
    <property type="entry name" value="ELONGATNFCT"/>
</dbReference>
<dbReference type="SUPFAM" id="SSF54980">
    <property type="entry name" value="EF-G C-terminal domain-like"/>
    <property type="match status" value="2"/>
</dbReference>
<dbReference type="SUPFAM" id="SSF52540">
    <property type="entry name" value="P-loop containing nucleoside triphosphate hydrolases"/>
    <property type="match status" value="1"/>
</dbReference>
<dbReference type="SUPFAM" id="SSF50447">
    <property type="entry name" value="Translation proteins"/>
    <property type="match status" value="1"/>
</dbReference>
<dbReference type="PROSITE" id="PS00301">
    <property type="entry name" value="G_TR_1"/>
    <property type="match status" value="1"/>
</dbReference>
<dbReference type="PROSITE" id="PS51722">
    <property type="entry name" value="G_TR_2"/>
    <property type="match status" value="1"/>
</dbReference>
<reference key="1">
    <citation type="journal article" date="2008" name="PLoS Genet.">
        <title>Genomic islands in the pathogenic filamentous fungus Aspergillus fumigatus.</title>
        <authorList>
            <person name="Fedorova N.D."/>
            <person name="Khaldi N."/>
            <person name="Joardar V.S."/>
            <person name="Maiti R."/>
            <person name="Amedeo P."/>
            <person name="Anderson M.J."/>
            <person name="Crabtree J."/>
            <person name="Silva J.C."/>
            <person name="Badger J.H."/>
            <person name="Albarraq A."/>
            <person name="Angiuoli S."/>
            <person name="Bussey H."/>
            <person name="Bowyer P."/>
            <person name="Cotty P.J."/>
            <person name="Dyer P.S."/>
            <person name="Egan A."/>
            <person name="Galens K."/>
            <person name="Fraser-Liggett C.M."/>
            <person name="Haas B.J."/>
            <person name="Inman J.M."/>
            <person name="Kent R."/>
            <person name="Lemieux S."/>
            <person name="Malavazi I."/>
            <person name="Orvis J."/>
            <person name="Roemer T."/>
            <person name="Ronning C.M."/>
            <person name="Sundaram J.P."/>
            <person name="Sutton G."/>
            <person name="Turner G."/>
            <person name="Venter J.C."/>
            <person name="White O.R."/>
            <person name="Whitty B.R."/>
            <person name="Youngman P."/>
            <person name="Wolfe K.H."/>
            <person name="Goldman G.H."/>
            <person name="Wortman J.R."/>
            <person name="Jiang B."/>
            <person name="Denning D.W."/>
            <person name="Nierman W.C."/>
        </authorList>
    </citation>
    <scope>NUCLEOTIDE SEQUENCE [LARGE SCALE GENOMIC DNA]</scope>
    <source>
        <strain>ATCC 1020 / DSM 3700 / CBS 544.65 / FGSC A1164 / JCM 1740 / NRRL 181 / WB 181</strain>
    </source>
</reference>
<evidence type="ECO:0000255" key="1">
    <source>
        <dbReference type="HAMAP-Rule" id="MF_03137"/>
    </source>
</evidence>
<evidence type="ECO:0000305" key="2"/>